<accession>P0C6T1</accession>
<name>CTF8_RAT</name>
<gene>
    <name evidence="3" type="primary">Chtf8</name>
    <name type="synonym">Ctf8</name>
</gene>
<organism>
    <name type="scientific">Rattus norvegicus</name>
    <name type="common">Rat</name>
    <dbReference type="NCBI Taxonomy" id="10116"/>
    <lineage>
        <taxon>Eukaryota</taxon>
        <taxon>Metazoa</taxon>
        <taxon>Chordata</taxon>
        <taxon>Craniata</taxon>
        <taxon>Vertebrata</taxon>
        <taxon>Euteleostomi</taxon>
        <taxon>Mammalia</taxon>
        <taxon>Eutheria</taxon>
        <taxon>Euarchontoglires</taxon>
        <taxon>Glires</taxon>
        <taxon>Rodentia</taxon>
        <taxon>Myomorpha</taxon>
        <taxon>Muroidea</taxon>
        <taxon>Muridae</taxon>
        <taxon>Murinae</taxon>
        <taxon>Rattus</taxon>
    </lineage>
</organism>
<keyword id="KW-0131">Cell cycle</keyword>
<keyword id="KW-0235">DNA replication</keyword>
<keyword id="KW-0238">DNA-binding</keyword>
<keyword id="KW-0539">Nucleus</keyword>
<keyword id="KW-1185">Reference proteome</keyword>
<protein>
    <recommendedName>
        <fullName evidence="1">Chromosome transmission fidelity protein 8 homolog</fullName>
    </recommendedName>
</protein>
<dbReference type="EMBL" id="AABR03113443">
    <property type="status" value="NOT_ANNOTATED_CDS"/>
    <property type="molecule type" value="Genomic_DNA"/>
</dbReference>
<dbReference type="RefSeq" id="NP_001181880.1">
    <property type="nucleotide sequence ID" value="NM_001194951.1"/>
</dbReference>
<dbReference type="BioGRID" id="265075">
    <property type="interactions" value="1"/>
</dbReference>
<dbReference type="FunCoup" id="P0C6T1">
    <property type="interactions" value="3075"/>
</dbReference>
<dbReference type="STRING" id="10116.ENSRNOP00000063969"/>
<dbReference type="PhosphoSitePlus" id="P0C6T1"/>
<dbReference type="GeneID" id="364996"/>
<dbReference type="KEGG" id="rno:364996"/>
<dbReference type="UCSC" id="RGD:1306894">
    <property type="organism name" value="rat"/>
</dbReference>
<dbReference type="AGR" id="RGD:1306894"/>
<dbReference type="CTD" id="54921"/>
<dbReference type="RGD" id="1306894">
    <property type="gene designation" value="Chtf8"/>
</dbReference>
<dbReference type="VEuPathDB" id="HostDB:ENSRNOG00000047246"/>
<dbReference type="HOGENOM" id="CLU_066293_3_0_1"/>
<dbReference type="InParanoid" id="P0C6T1"/>
<dbReference type="PhylomeDB" id="P0C6T1"/>
<dbReference type="TreeFam" id="TF314676"/>
<dbReference type="Reactome" id="R-RNO-174411">
    <property type="pathway name" value="Polymerase switching on the C-strand of the telomere"/>
</dbReference>
<dbReference type="PRO" id="PR:P0C6T1"/>
<dbReference type="Proteomes" id="UP000002494">
    <property type="component" value="Chromosome 19"/>
</dbReference>
<dbReference type="Bgee" id="ENSRNOG00000047246">
    <property type="expression patterns" value="Expressed in thymus and 19 other cell types or tissues"/>
</dbReference>
<dbReference type="GO" id="GO:0031390">
    <property type="term" value="C:Ctf18 RFC-like complex"/>
    <property type="evidence" value="ECO:0000250"/>
    <property type="project" value="UniProtKB"/>
</dbReference>
<dbReference type="GO" id="GO:0003677">
    <property type="term" value="F:DNA binding"/>
    <property type="evidence" value="ECO:0007669"/>
    <property type="project" value="UniProtKB-KW"/>
</dbReference>
<dbReference type="GO" id="GO:0006260">
    <property type="term" value="P:DNA replication"/>
    <property type="evidence" value="ECO:0007669"/>
    <property type="project" value="UniProtKB-KW"/>
</dbReference>
<dbReference type="GO" id="GO:0007064">
    <property type="term" value="P:mitotic sister chromatid cohesion"/>
    <property type="evidence" value="ECO:0007669"/>
    <property type="project" value="InterPro"/>
</dbReference>
<dbReference type="GO" id="GO:1900264">
    <property type="term" value="P:positive regulation of DNA-directed DNA polymerase activity"/>
    <property type="evidence" value="ECO:0000250"/>
    <property type="project" value="UniProtKB"/>
</dbReference>
<dbReference type="InterPro" id="IPR018607">
    <property type="entry name" value="Ctf8"/>
</dbReference>
<dbReference type="PANTHER" id="PTHR28605:SF3">
    <property type="entry name" value="CHROMOSOME TRANSMISSION FIDELITY PROTEIN 8 HOMOLOG"/>
    <property type="match status" value="1"/>
</dbReference>
<dbReference type="PANTHER" id="PTHR28605">
    <property type="entry name" value="CTF8, CHROMOSOME TRANSMISSION FIDELITY FACTOR 8 HOMOLOG (S. CEREVISIAE)"/>
    <property type="match status" value="1"/>
</dbReference>
<dbReference type="Pfam" id="PF09696">
    <property type="entry name" value="Ctf8"/>
    <property type="match status" value="1"/>
</dbReference>
<feature type="chain" id="PRO_0000327255" description="Chromosome transmission fidelity protein 8 homolog">
    <location>
        <begin position="1"/>
        <end position="121"/>
    </location>
</feature>
<comment type="function">
    <text evidence="1">Chromosome cohesion factor involved in sister chromatid cohesion and fidelity of chromosome transmission. Component of one of the cell nuclear antigen loader complexes, CTF18-replication factor C (CTF18-RFC), which consists of CTF18, CTF8, DSCC1, RFC2, RFC3, RFC4 and RFC5. The CTF18-RFC complex binds to single-stranded and primed DNAs and has weak ATPase activity that is stimulated the presence of primed DNA, replication protein A (RPA) and proliferating cell nuclear antigen (PCNA). The CTF18-RFC complex catalyzes the ATP-dependent loading of PCNA onto primed and gapped DNA. It also interacts with and stimulates POLH, which is suggestive of a protein network that coordinates DNA repair, recombination and chromosome cohesion reactions with replication fork progression (By similarity).</text>
</comment>
<comment type="subunit">
    <text evidence="1">Component of the CTF18-RFC complex, which consists of CTF18, CTF8, DSCC1, RFC2, RFC3, RFC4 and RFC5. The CTF18-RFC complex does not interact with the Rad9/Rad1/Hus1 complex. The CTF18-RFC complex interacts with POLH. CTF18/CTF8/DSCC1 associate with PCNA. CTF8 exists as a dimer with DSCC1 (By similarity).</text>
</comment>
<comment type="subcellular location">
    <subcellularLocation>
        <location evidence="1">Nucleus</location>
    </subcellularLocation>
    <text evidence="1">Associates with chromatin during S phase.</text>
</comment>
<comment type="similarity">
    <text evidence="2">Belongs to the CTF8 family.</text>
</comment>
<reference key="1">
    <citation type="journal article" date="2004" name="Nature">
        <title>Genome sequence of the Brown Norway rat yields insights into mammalian evolution.</title>
        <authorList>
            <person name="Gibbs R.A."/>
            <person name="Weinstock G.M."/>
            <person name="Metzker M.L."/>
            <person name="Muzny D.M."/>
            <person name="Sodergren E.J."/>
            <person name="Scherer S."/>
            <person name="Scott G."/>
            <person name="Steffen D."/>
            <person name="Worley K.C."/>
            <person name="Burch P.E."/>
            <person name="Okwuonu G."/>
            <person name="Hines S."/>
            <person name="Lewis L."/>
            <person name="Deramo C."/>
            <person name="Delgado O."/>
            <person name="Dugan-Rocha S."/>
            <person name="Miner G."/>
            <person name="Morgan M."/>
            <person name="Hawes A."/>
            <person name="Gill R."/>
            <person name="Holt R.A."/>
            <person name="Adams M.D."/>
            <person name="Amanatides P.G."/>
            <person name="Baden-Tillson H."/>
            <person name="Barnstead M."/>
            <person name="Chin S."/>
            <person name="Evans C.A."/>
            <person name="Ferriera S."/>
            <person name="Fosler C."/>
            <person name="Glodek A."/>
            <person name="Gu Z."/>
            <person name="Jennings D."/>
            <person name="Kraft C.L."/>
            <person name="Nguyen T."/>
            <person name="Pfannkoch C.M."/>
            <person name="Sitter C."/>
            <person name="Sutton G.G."/>
            <person name="Venter J.C."/>
            <person name="Woodage T."/>
            <person name="Smith D."/>
            <person name="Lee H.-M."/>
            <person name="Gustafson E."/>
            <person name="Cahill P."/>
            <person name="Kana A."/>
            <person name="Doucette-Stamm L."/>
            <person name="Weinstock K."/>
            <person name="Fechtel K."/>
            <person name="Weiss R.B."/>
            <person name="Dunn D.M."/>
            <person name="Green E.D."/>
            <person name="Blakesley R.W."/>
            <person name="Bouffard G.G."/>
            <person name="De Jong P.J."/>
            <person name="Osoegawa K."/>
            <person name="Zhu B."/>
            <person name="Marra M."/>
            <person name="Schein J."/>
            <person name="Bosdet I."/>
            <person name="Fjell C."/>
            <person name="Jones S."/>
            <person name="Krzywinski M."/>
            <person name="Mathewson C."/>
            <person name="Siddiqui A."/>
            <person name="Wye N."/>
            <person name="McPherson J."/>
            <person name="Zhao S."/>
            <person name="Fraser C.M."/>
            <person name="Shetty J."/>
            <person name="Shatsman S."/>
            <person name="Geer K."/>
            <person name="Chen Y."/>
            <person name="Abramzon S."/>
            <person name="Nierman W.C."/>
            <person name="Havlak P.H."/>
            <person name="Chen R."/>
            <person name="Durbin K.J."/>
            <person name="Egan A."/>
            <person name="Ren Y."/>
            <person name="Song X.-Z."/>
            <person name="Li B."/>
            <person name="Liu Y."/>
            <person name="Qin X."/>
            <person name="Cawley S."/>
            <person name="Cooney A.J."/>
            <person name="D'Souza L.M."/>
            <person name="Martin K."/>
            <person name="Wu J.Q."/>
            <person name="Gonzalez-Garay M.L."/>
            <person name="Jackson A.R."/>
            <person name="Kalafus K.J."/>
            <person name="McLeod M.P."/>
            <person name="Milosavljevic A."/>
            <person name="Virk D."/>
            <person name="Volkov A."/>
            <person name="Wheeler D.A."/>
            <person name="Zhang Z."/>
            <person name="Bailey J.A."/>
            <person name="Eichler E.E."/>
            <person name="Tuzun E."/>
            <person name="Birney E."/>
            <person name="Mongin E."/>
            <person name="Ureta-Vidal A."/>
            <person name="Woodwark C."/>
            <person name="Zdobnov E."/>
            <person name="Bork P."/>
            <person name="Suyama M."/>
            <person name="Torrents D."/>
            <person name="Alexandersson M."/>
            <person name="Trask B.J."/>
            <person name="Young J.M."/>
            <person name="Huang H."/>
            <person name="Wang H."/>
            <person name="Xing H."/>
            <person name="Daniels S."/>
            <person name="Gietzen D."/>
            <person name="Schmidt J."/>
            <person name="Stevens K."/>
            <person name="Vitt U."/>
            <person name="Wingrove J."/>
            <person name="Camara F."/>
            <person name="Mar Alba M."/>
            <person name="Abril J.F."/>
            <person name="Guigo R."/>
            <person name="Smit A."/>
            <person name="Dubchak I."/>
            <person name="Rubin E.M."/>
            <person name="Couronne O."/>
            <person name="Poliakov A."/>
            <person name="Huebner N."/>
            <person name="Ganten D."/>
            <person name="Goesele C."/>
            <person name="Hummel O."/>
            <person name="Kreitler T."/>
            <person name="Lee Y.-A."/>
            <person name="Monti J."/>
            <person name="Schulz H."/>
            <person name="Zimdahl H."/>
            <person name="Himmelbauer H."/>
            <person name="Lehrach H."/>
            <person name="Jacob H.J."/>
            <person name="Bromberg S."/>
            <person name="Gullings-Handley J."/>
            <person name="Jensen-Seaman M.I."/>
            <person name="Kwitek A.E."/>
            <person name="Lazar J."/>
            <person name="Pasko D."/>
            <person name="Tonellato P.J."/>
            <person name="Twigger S."/>
            <person name="Ponting C.P."/>
            <person name="Duarte J.M."/>
            <person name="Rice S."/>
            <person name="Goodstadt L."/>
            <person name="Beatson S.A."/>
            <person name="Emes R.D."/>
            <person name="Winter E.E."/>
            <person name="Webber C."/>
            <person name="Brandt P."/>
            <person name="Nyakatura G."/>
            <person name="Adetobi M."/>
            <person name="Chiaromonte F."/>
            <person name="Elnitski L."/>
            <person name="Eswara P."/>
            <person name="Hardison R.C."/>
            <person name="Hou M."/>
            <person name="Kolbe D."/>
            <person name="Makova K."/>
            <person name="Miller W."/>
            <person name="Nekrutenko A."/>
            <person name="Riemer C."/>
            <person name="Schwartz S."/>
            <person name="Taylor J."/>
            <person name="Yang S."/>
            <person name="Zhang Y."/>
            <person name="Lindpaintner K."/>
            <person name="Andrews T.D."/>
            <person name="Caccamo M."/>
            <person name="Clamp M."/>
            <person name="Clarke L."/>
            <person name="Curwen V."/>
            <person name="Durbin R.M."/>
            <person name="Eyras E."/>
            <person name="Searle S.M."/>
            <person name="Cooper G.M."/>
            <person name="Batzoglou S."/>
            <person name="Brudno M."/>
            <person name="Sidow A."/>
            <person name="Stone E.A."/>
            <person name="Payseur B.A."/>
            <person name="Bourque G."/>
            <person name="Lopez-Otin C."/>
            <person name="Puente X.S."/>
            <person name="Chakrabarti K."/>
            <person name="Chatterji S."/>
            <person name="Dewey C."/>
            <person name="Pachter L."/>
            <person name="Bray N."/>
            <person name="Yap V.B."/>
            <person name="Caspi A."/>
            <person name="Tesler G."/>
            <person name="Pevzner P.A."/>
            <person name="Haussler D."/>
            <person name="Roskin K.M."/>
            <person name="Baertsch R."/>
            <person name="Clawson H."/>
            <person name="Furey T.S."/>
            <person name="Hinrichs A.S."/>
            <person name="Karolchik D."/>
            <person name="Kent W.J."/>
            <person name="Rosenbloom K.R."/>
            <person name="Trumbower H."/>
            <person name="Weirauch M."/>
            <person name="Cooper D.N."/>
            <person name="Stenson P.D."/>
            <person name="Ma B."/>
            <person name="Brent M."/>
            <person name="Arumugam M."/>
            <person name="Shteynberg D."/>
            <person name="Copley R.R."/>
            <person name="Taylor M.S."/>
            <person name="Riethman H."/>
            <person name="Mudunuri U."/>
            <person name="Peterson J."/>
            <person name="Guyer M."/>
            <person name="Felsenfeld A."/>
            <person name="Old S."/>
            <person name="Mockrin S."/>
            <person name="Collins F.S."/>
        </authorList>
    </citation>
    <scope>NUCLEOTIDE SEQUENCE [LARGE SCALE GENOMIC DNA]</scope>
    <source>
        <strain>Brown Norway</strain>
    </source>
</reference>
<proteinExistence type="inferred from homology"/>
<evidence type="ECO:0000250" key="1">
    <source>
        <dbReference type="UniProtKB" id="P0CG13"/>
    </source>
</evidence>
<evidence type="ECO:0000305" key="2"/>
<evidence type="ECO:0000312" key="3">
    <source>
        <dbReference type="RGD" id="1306894"/>
    </source>
</evidence>
<sequence length="121" mass="13328">MVQIVISSTGAEGLAEWVLMELQGEIEARYSTGLAGNLLGDLHYTTEGIPVLIVGHHILYGKIIHLEKPFAVLVKHTPGKQDCDELGRETGTQYLVTALIKNKILFKTRPKPIITNVPKKV</sequence>